<reference evidence="8" key="1">
    <citation type="journal article" date="2002" name="Nature">
        <title>The genome sequence of Schizosaccharomyces pombe.</title>
        <authorList>
            <person name="Wood V."/>
            <person name="Gwilliam R."/>
            <person name="Rajandream M.A."/>
            <person name="Lyne M.H."/>
            <person name="Lyne R."/>
            <person name="Stewart A."/>
            <person name="Sgouros J.G."/>
            <person name="Peat N."/>
            <person name="Hayles J."/>
            <person name="Baker S.G."/>
            <person name="Basham D."/>
            <person name="Bowman S."/>
            <person name="Brooks K."/>
            <person name="Brown D."/>
            <person name="Brown S."/>
            <person name="Chillingworth T."/>
            <person name="Churcher C.M."/>
            <person name="Collins M."/>
            <person name="Connor R."/>
            <person name="Cronin A."/>
            <person name="Davis P."/>
            <person name="Feltwell T."/>
            <person name="Fraser A."/>
            <person name="Gentles S."/>
            <person name="Goble A."/>
            <person name="Hamlin N."/>
            <person name="Harris D.E."/>
            <person name="Hidalgo J."/>
            <person name="Hodgson G."/>
            <person name="Holroyd S."/>
            <person name="Hornsby T."/>
            <person name="Howarth S."/>
            <person name="Huckle E.J."/>
            <person name="Hunt S."/>
            <person name="Jagels K."/>
            <person name="James K.D."/>
            <person name="Jones L."/>
            <person name="Jones M."/>
            <person name="Leather S."/>
            <person name="McDonald S."/>
            <person name="McLean J."/>
            <person name="Mooney P."/>
            <person name="Moule S."/>
            <person name="Mungall K.L."/>
            <person name="Murphy L.D."/>
            <person name="Niblett D."/>
            <person name="Odell C."/>
            <person name="Oliver K."/>
            <person name="O'Neil S."/>
            <person name="Pearson D."/>
            <person name="Quail M.A."/>
            <person name="Rabbinowitsch E."/>
            <person name="Rutherford K.M."/>
            <person name="Rutter S."/>
            <person name="Saunders D."/>
            <person name="Seeger K."/>
            <person name="Sharp S."/>
            <person name="Skelton J."/>
            <person name="Simmonds M.N."/>
            <person name="Squares R."/>
            <person name="Squares S."/>
            <person name="Stevens K."/>
            <person name="Taylor K."/>
            <person name="Taylor R.G."/>
            <person name="Tivey A."/>
            <person name="Walsh S.V."/>
            <person name="Warren T."/>
            <person name="Whitehead S."/>
            <person name="Woodward J.R."/>
            <person name="Volckaert G."/>
            <person name="Aert R."/>
            <person name="Robben J."/>
            <person name="Grymonprez B."/>
            <person name="Weltjens I."/>
            <person name="Vanstreels E."/>
            <person name="Rieger M."/>
            <person name="Schaefer M."/>
            <person name="Mueller-Auer S."/>
            <person name="Gabel C."/>
            <person name="Fuchs M."/>
            <person name="Duesterhoeft A."/>
            <person name="Fritzc C."/>
            <person name="Holzer E."/>
            <person name="Moestl D."/>
            <person name="Hilbert H."/>
            <person name="Borzym K."/>
            <person name="Langer I."/>
            <person name="Beck A."/>
            <person name="Lehrach H."/>
            <person name="Reinhardt R."/>
            <person name="Pohl T.M."/>
            <person name="Eger P."/>
            <person name="Zimmermann W."/>
            <person name="Wedler H."/>
            <person name="Wambutt R."/>
            <person name="Purnelle B."/>
            <person name="Goffeau A."/>
            <person name="Cadieu E."/>
            <person name="Dreano S."/>
            <person name="Gloux S."/>
            <person name="Lelaure V."/>
            <person name="Mottier S."/>
            <person name="Galibert F."/>
            <person name="Aves S.J."/>
            <person name="Xiang Z."/>
            <person name="Hunt C."/>
            <person name="Moore K."/>
            <person name="Hurst S.M."/>
            <person name="Lucas M."/>
            <person name="Rochet M."/>
            <person name="Gaillardin C."/>
            <person name="Tallada V.A."/>
            <person name="Garzon A."/>
            <person name="Thode G."/>
            <person name="Daga R.R."/>
            <person name="Cruzado L."/>
            <person name="Jimenez J."/>
            <person name="Sanchez M."/>
            <person name="del Rey F."/>
            <person name="Benito J."/>
            <person name="Dominguez A."/>
            <person name="Revuelta J.L."/>
            <person name="Moreno S."/>
            <person name="Armstrong J."/>
            <person name="Forsburg S.L."/>
            <person name="Cerutti L."/>
            <person name="Lowe T."/>
            <person name="McCombie W.R."/>
            <person name="Paulsen I."/>
            <person name="Potashkin J."/>
            <person name="Shpakovski G.V."/>
            <person name="Ussery D."/>
            <person name="Barrell B.G."/>
            <person name="Nurse P."/>
        </authorList>
    </citation>
    <scope>NUCLEOTIDE SEQUENCE [LARGE SCALE GENOMIC DNA]</scope>
    <source>
        <strain>972 / ATCC 24843</strain>
    </source>
</reference>
<reference evidence="7" key="2">
    <citation type="journal article" date="2006" name="Nat. Biotechnol.">
        <title>ORFeome cloning and global analysis of protein localization in the fission yeast Schizosaccharomyces pombe.</title>
        <authorList>
            <person name="Matsuyama A."/>
            <person name="Arai R."/>
            <person name="Yashiroda Y."/>
            <person name="Shirai A."/>
            <person name="Kamata A."/>
            <person name="Sekido S."/>
            <person name="Kobayashi Y."/>
            <person name="Hashimoto A."/>
            <person name="Hamamoto M."/>
            <person name="Hiraoka Y."/>
            <person name="Horinouchi S."/>
            <person name="Yoshida M."/>
        </authorList>
    </citation>
    <scope>SUBCELLULAR LOCATION [LARGE SCALE ANALYSIS]</scope>
</reference>
<name>YEOB_SCHPO</name>
<accession>O13789</accession>
<feature type="chain" id="PRO_0000317219" description="Uncharacterized beta-glucan synthesis-associated protein C17G6.11c">
    <location>
        <begin position="1"/>
        <end position="636"/>
    </location>
</feature>
<feature type="topological domain" description="Cytoplasmic" evidence="1 3">
    <location>
        <begin position="1"/>
        <end position="170"/>
    </location>
</feature>
<feature type="transmembrane region" description="Helical; Signal-anchor for type II membrane protein" evidence="3">
    <location>
        <begin position="171"/>
        <end position="191"/>
    </location>
</feature>
<feature type="topological domain" description="Lumenal" evidence="1 3">
    <location>
        <begin position="192"/>
        <end position="636"/>
    </location>
</feature>
<feature type="domain" description="GH16" evidence="4">
    <location>
        <begin position="218"/>
        <end position="587"/>
    </location>
</feature>
<feature type="region of interest" description="Disordered" evidence="5">
    <location>
        <begin position="1"/>
        <end position="22"/>
    </location>
</feature>
<feature type="region of interest" description="Disordered" evidence="5">
    <location>
        <begin position="81"/>
        <end position="107"/>
    </location>
</feature>
<feature type="glycosylation site" description="N-linked (GlcNAc...) asparagine" evidence="3">
    <location>
        <position position="291"/>
    </location>
</feature>
<feature type="glycosylation site" description="N-linked (GlcNAc...) asparagine" evidence="3">
    <location>
        <position position="378"/>
    </location>
</feature>
<feature type="glycosylation site" description="N-linked (GlcNAc...) asparagine" evidence="3">
    <location>
        <position position="429"/>
    </location>
</feature>
<feature type="glycosylation site" description="N-linked (GlcNAc...) asparagine" evidence="3">
    <location>
        <position position="464"/>
    </location>
</feature>
<feature type="glycosylation site" description="N-linked (GlcNAc...) asparagine" evidence="3">
    <location>
        <position position="489"/>
    </location>
</feature>
<feature type="glycosylation site" description="N-linked (GlcNAc...) asparagine" evidence="3">
    <location>
        <position position="616"/>
    </location>
</feature>
<sequence length="636" mass="70008">MYNVRGDLNRKTPSDGNVNEIGSMYASRDTSTSSFTNPTDSSTRLLYNNASNATFSSAALAAGVGGTRASGYTHRFSIRPSSQTYNRYPNGGNSAGSDMYSTSPQNNSIVDDIENINKLEAVAFAGPTAGESDFSLSREDKEIDDFLHYPLPAKDAKKLSYFVGGEGLMQLLFLLFLAAGTGMLFIGLPILTYTGHNSLASTRVTGITNHQFRILRLLRYGSLIDPDTPESAYTFDSQDLGTLDLVFSDEFNYPGRAFYDGDDQFWLATDLHYAATTDYEYYDADTPTTANGTLRLRMDAFYNHDLNFRSGMVTTWNKLCFKGGRIEVSASLGGSPYIPGFWPGIWTIGNLVRPGYLATSDGVWPYSYNSCDAGITPNQSDPSGISYLGGQRLNQCVCKGEDHPNVGTGRGGPEIDALEGTFGSGIPYNGSIYLETMPVVSQSAQYAPFDLYMYPNYDFVTIYNQSVSAMNGWAGGVYQQALSCASQLNNSWLSGNAYQKYGFDYKPGSGPDALISWFVGDEYTWTMRQPAVGQNGNIASRPVSEEPMIVVLNFGISPTWIYFYWYELTFPQTMYVDYVRIYQDSSDSSSVLGCDPEGFPTTEYIANHPKAYLNYNATSWSEAGYVRPKNSLMDGC</sequence>
<comment type="function">
    <text evidence="2">Required for synthesis of the major beta-glucans of the yeast cell wall.</text>
</comment>
<comment type="subcellular location">
    <subcellularLocation>
        <location evidence="6">Endoplasmic reticulum membrane</location>
        <topology evidence="6">Single-pass type II membrane protein</topology>
    </subcellularLocation>
</comment>
<comment type="similarity">
    <text evidence="7">Belongs to the SKN1/KRE6 family.</text>
</comment>
<gene>
    <name type="ORF">SPAC17G6.11c</name>
</gene>
<proteinExistence type="inferred from homology"/>
<organism>
    <name type="scientific">Schizosaccharomyces pombe (strain 972 / ATCC 24843)</name>
    <name type="common">Fission yeast</name>
    <dbReference type="NCBI Taxonomy" id="284812"/>
    <lineage>
        <taxon>Eukaryota</taxon>
        <taxon>Fungi</taxon>
        <taxon>Dikarya</taxon>
        <taxon>Ascomycota</taxon>
        <taxon>Taphrinomycotina</taxon>
        <taxon>Schizosaccharomycetes</taxon>
        <taxon>Schizosaccharomycetales</taxon>
        <taxon>Schizosaccharomycetaceae</taxon>
        <taxon>Schizosaccharomyces</taxon>
    </lineage>
</organism>
<dbReference type="EMBL" id="CU329670">
    <property type="protein sequence ID" value="CAB16222.1"/>
    <property type="molecule type" value="Genomic_DNA"/>
</dbReference>
<dbReference type="PIR" id="T37843">
    <property type="entry name" value="T37843"/>
</dbReference>
<dbReference type="SMR" id="O13789"/>
<dbReference type="BioGRID" id="278646">
    <property type="interactions" value="1"/>
</dbReference>
<dbReference type="FunCoup" id="O13789">
    <property type="interactions" value="66"/>
</dbReference>
<dbReference type="STRING" id="284812.O13789"/>
<dbReference type="CAZy" id="GH16">
    <property type="family name" value="Glycoside Hydrolase Family 16"/>
</dbReference>
<dbReference type="iPTMnet" id="O13789"/>
<dbReference type="PaxDb" id="4896-SPAC17G6.11c.1"/>
<dbReference type="EnsemblFungi" id="SPAC17G6.11c.1">
    <property type="protein sequence ID" value="SPAC17G6.11c.1:pep"/>
    <property type="gene ID" value="SPAC17G6.11c"/>
</dbReference>
<dbReference type="KEGG" id="spo:2542171"/>
<dbReference type="PomBase" id="SPAC17G6.11c"/>
<dbReference type="VEuPathDB" id="FungiDB:SPAC17G6.11c"/>
<dbReference type="eggNOG" id="ENOG502QR13">
    <property type="taxonomic scope" value="Eukaryota"/>
</dbReference>
<dbReference type="HOGENOM" id="CLU_010811_4_2_1"/>
<dbReference type="InParanoid" id="O13789"/>
<dbReference type="OMA" id="YITWINE"/>
<dbReference type="PhylomeDB" id="O13789"/>
<dbReference type="PRO" id="PR:O13789"/>
<dbReference type="Proteomes" id="UP000002485">
    <property type="component" value="Chromosome I"/>
</dbReference>
<dbReference type="GO" id="GO:0005783">
    <property type="term" value="C:endoplasmic reticulum"/>
    <property type="evidence" value="ECO:0007005"/>
    <property type="project" value="PomBase"/>
</dbReference>
<dbReference type="GO" id="GO:0005789">
    <property type="term" value="C:endoplasmic reticulum membrane"/>
    <property type="evidence" value="ECO:0000318"/>
    <property type="project" value="GO_Central"/>
</dbReference>
<dbReference type="GO" id="GO:0005886">
    <property type="term" value="C:plasma membrane"/>
    <property type="evidence" value="ECO:0000318"/>
    <property type="project" value="GO_Central"/>
</dbReference>
<dbReference type="GO" id="GO:0015926">
    <property type="term" value="F:glucosidase activity"/>
    <property type="evidence" value="ECO:0000318"/>
    <property type="project" value="GO_Central"/>
</dbReference>
<dbReference type="GO" id="GO:0006078">
    <property type="term" value="P:(1-&gt;6)-beta-D-glucan biosynthetic process"/>
    <property type="evidence" value="ECO:0000318"/>
    <property type="project" value="GO_Central"/>
</dbReference>
<dbReference type="GO" id="GO:0071554">
    <property type="term" value="P:cell wall organization or biogenesis"/>
    <property type="evidence" value="ECO:0000315"/>
    <property type="project" value="PomBase"/>
</dbReference>
<dbReference type="GO" id="GO:0031505">
    <property type="term" value="P:fungal-type cell wall organization"/>
    <property type="evidence" value="ECO:0000318"/>
    <property type="project" value="GO_Central"/>
</dbReference>
<dbReference type="GO" id="GO:0030148">
    <property type="term" value="P:sphingolipid biosynthetic process"/>
    <property type="evidence" value="ECO:0000266"/>
    <property type="project" value="PomBase"/>
</dbReference>
<dbReference type="CDD" id="cd02180">
    <property type="entry name" value="GH16_fungal_KRE6_glucanase"/>
    <property type="match status" value="1"/>
</dbReference>
<dbReference type="Gene3D" id="2.60.120.200">
    <property type="match status" value="1"/>
</dbReference>
<dbReference type="InterPro" id="IPR013320">
    <property type="entry name" value="ConA-like_dom_sf"/>
</dbReference>
<dbReference type="InterPro" id="IPR000757">
    <property type="entry name" value="GH16"/>
</dbReference>
<dbReference type="InterPro" id="IPR005629">
    <property type="entry name" value="Skn1/Kre6/Sbg1"/>
</dbReference>
<dbReference type="PANTHER" id="PTHR31361">
    <property type="entry name" value="BETA-GLUCAN SYNTHESIS-ASSOCIATED PROTEIN KRE6-RELATED"/>
    <property type="match status" value="1"/>
</dbReference>
<dbReference type="PANTHER" id="PTHR31361:SF17">
    <property type="entry name" value="GLUCOSIDASE"/>
    <property type="match status" value="1"/>
</dbReference>
<dbReference type="Pfam" id="PF03935">
    <property type="entry name" value="SKN1_KRE6_Sbg1"/>
    <property type="match status" value="1"/>
</dbReference>
<dbReference type="SUPFAM" id="SSF49899">
    <property type="entry name" value="Concanavalin A-like lectins/glucanases"/>
    <property type="match status" value="1"/>
</dbReference>
<dbReference type="PROSITE" id="PS51762">
    <property type="entry name" value="GH16_2"/>
    <property type="match status" value="1"/>
</dbReference>
<protein>
    <recommendedName>
        <fullName>Uncharacterized beta-glucan synthesis-associated protein C17G6.11c</fullName>
    </recommendedName>
</protein>
<keyword id="KW-0961">Cell wall biogenesis/degradation</keyword>
<keyword id="KW-0256">Endoplasmic reticulum</keyword>
<keyword id="KW-0325">Glycoprotein</keyword>
<keyword id="KW-0472">Membrane</keyword>
<keyword id="KW-1185">Reference proteome</keyword>
<keyword id="KW-0735">Signal-anchor</keyword>
<keyword id="KW-0812">Transmembrane</keyword>
<keyword id="KW-1133">Transmembrane helix</keyword>
<evidence type="ECO:0000250" key="1">
    <source>
        <dbReference type="UniProtKB" id="P32486"/>
    </source>
</evidence>
<evidence type="ECO:0000250" key="2">
    <source>
        <dbReference type="UniProtKB" id="P33336"/>
    </source>
</evidence>
<evidence type="ECO:0000255" key="3"/>
<evidence type="ECO:0000255" key="4">
    <source>
        <dbReference type="PROSITE-ProRule" id="PRU01098"/>
    </source>
</evidence>
<evidence type="ECO:0000256" key="5">
    <source>
        <dbReference type="SAM" id="MobiDB-lite"/>
    </source>
</evidence>
<evidence type="ECO:0000269" key="6">
    <source>
    </source>
</evidence>
<evidence type="ECO:0000305" key="7"/>
<evidence type="ECO:0000312" key="8">
    <source>
        <dbReference type="EMBL" id="CAB16222.1"/>
    </source>
</evidence>